<evidence type="ECO:0000255" key="1">
    <source>
        <dbReference type="HAMAP-Rule" id="MF_01181"/>
    </source>
</evidence>
<comment type="function">
    <text evidence="1">Binds RpoD and negatively regulates RpoD-mediated transcription activation by preventing the interaction between the primary sigma factor RpoD with the catalytic core of the RNA polymerase and with promoter DNA. May be involved in replacement of the RNA polymerase sigma subunit from RpoD to RpoS during the transition from exponential growth to the stationary phase.</text>
</comment>
<comment type="subunit">
    <text evidence="1">Interacts with RpoD.</text>
</comment>
<comment type="subcellular location">
    <subcellularLocation>
        <location evidence="1">Cytoplasm</location>
    </subcellularLocation>
</comment>
<comment type="similarity">
    <text evidence="1">Belongs to the Rsd/AlgQ family.</text>
</comment>
<accession>B7MIY1</accession>
<organism>
    <name type="scientific">Escherichia coli O45:K1 (strain S88 / ExPEC)</name>
    <dbReference type="NCBI Taxonomy" id="585035"/>
    <lineage>
        <taxon>Bacteria</taxon>
        <taxon>Pseudomonadati</taxon>
        <taxon>Pseudomonadota</taxon>
        <taxon>Gammaproteobacteria</taxon>
        <taxon>Enterobacterales</taxon>
        <taxon>Enterobacteriaceae</taxon>
        <taxon>Escherichia</taxon>
    </lineage>
</organism>
<keyword id="KW-0963">Cytoplasm</keyword>
<keyword id="KW-1185">Reference proteome</keyword>
<keyword id="KW-0804">Transcription</keyword>
<keyword id="KW-0805">Transcription regulation</keyword>
<gene>
    <name evidence="1" type="primary">rsd</name>
    <name type="ordered locus">ECS88_4456</name>
</gene>
<protein>
    <recommendedName>
        <fullName evidence="1">Regulator of sigma D</fullName>
    </recommendedName>
</protein>
<feature type="chain" id="PRO_1000138188" description="Regulator of sigma D">
    <location>
        <begin position="1"/>
        <end position="158"/>
    </location>
</feature>
<sequence>MLNQLDNLTERVRGSNKLVDRWLHVRKHLLVAYYNLVGIKPGKESYMRLNEKALDDFCQSLVDYLSAGHFSIYERILHKLEGNGQLARAAKIWPQLEANTQQIMDDYDSSLETAIDHDNYLEFQQVLSDIGEALEARFVLEDKLILLVLDAARVKYPA</sequence>
<reference key="1">
    <citation type="journal article" date="2009" name="PLoS Genet.">
        <title>Organised genome dynamics in the Escherichia coli species results in highly diverse adaptive paths.</title>
        <authorList>
            <person name="Touchon M."/>
            <person name="Hoede C."/>
            <person name="Tenaillon O."/>
            <person name="Barbe V."/>
            <person name="Baeriswyl S."/>
            <person name="Bidet P."/>
            <person name="Bingen E."/>
            <person name="Bonacorsi S."/>
            <person name="Bouchier C."/>
            <person name="Bouvet O."/>
            <person name="Calteau A."/>
            <person name="Chiapello H."/>
            <person name="Clermont O."/>
            <person name="Cruveiller S."/>
            <person name="Danchin A."/>
            <person name="Diard M."/>
            <person name="Dossat C."/>
            <person name="Karoui M.E."/>
            <person name="Frapy E."/>
            <person name="Garry L."/>
            <person name="Ghigo J.M."/>
            <person name="Gilles A.M."/>
            <person name="Johnson J."/>
            <person name="Le Bouguenec C."/>
            <person name="Lescat M."/>
            <person name="Mangenot S."/>
            <person name="Martinez-Jehanne V."/>
            <person name="Matic I."/>
            <person name="Nassif X."/>
            <person name="Oztas S."/>
            <person name="Petit M.A."/>
            <person name="Pichon C."/>
            <person name="Rouy Z."/>
            <person name="Ruf C.S."/>
            <person name="Schneider D."/>
            <person name="Tourret J."/>
            <person name="Vacherie B."/>
            <person name="Vallenet D."/>
            <person name="Medigue C."/>
            <person name="Rocha E.P.C."/>
            <person name="Denamur E."/>
        </authorList>
    </citation>
    <scope>NUCLEOTIDE SEQUENCE [LARGE SCALE GENOMIC DNA]</scope>
    <source>
        <strain>S88 / ExPEC</strain>
    </source>
</reference>
<proteinExistence type="inferred from homology"/>
<dbReference type="EMBL" id="CU928161">
    <property type="protein sequence ID" value="CAR05625.1"/>
    <property type="molecule type" value="Genomic_DNA"/>
</dbReference>
<dbReference type="RefSeq" id="WP_000934300.1">
    <property type="nucleotide sequence ID" value="NC_011742.1"/>
</dbReference>
<dbReference type="SMR" id="B7MIY1"/>
<dbReference type="KEGG" id="ecz:ECS88_4456"/>
<dbReference type="HOGENOM" id="CLU_142729_0_0_6"/>
<dbReference type="Proteomes" id="UP000000747">
    <property type="component" value="Chromosome"/>
</dbReference>
<dbReference type="GO" id="GO:0005737">
    <property type="term" value="C:cytoplasm"/>
    <property type="evidence" value="ECO:0007669"/>
    <property type="project" value="UniProtKB-SubCell"/>
</dbReference>
<dbReference type="GO" id="GO:0006355">
    <property type="term" value="P:regulation of DNA-templated transcription"/>
    <property type="evidence" value="ECO:0007669"/>
    <property type="project" value="InterPro"/>
</dbReference>
<dbReference type="FunFam" id="1.20.120.1370:FF:000001">
    <property type="entry name" value="Regulator of sigma D"/>
    <property type="match status" value="1"/>
</dbReference>
<dbReference type="Gene3D" id="1.20.120.1370">
    <property type="entry name" value="Regulator of RNA polymerase sigma(70) subunit, domain 4"/>
    <property type="match status" value="1"/>
</dbReference>
<dbReference type="HAMAP" id="MF_01181">
    <property type="entry name" value="Rsd"/>
    <property type="match status" value="1"/>
</dbReference>
<dbReference type="InterPro" id="IPR038309">
    <property type="entry name" value="Rsd/AlgQ_sf"/>
</dbReference>
<dbReference type="InterPro" id="IPR023785">
    <property type="entry name" value="Sigma70_reg_Rsd"/>
</dbReference>
<dbReference type="InterPro" id="IPR007448">
    <property type="entry name" value="Sigma70_reg_Rsd_AlgQ"/>
</dbReference>
<dbReference type="NCBIfam" id="NF008723">
    <property type="entry name" value="PRK11718.1"/>
    <property type="match status" value="1"/>
</dbReference>
<dbReference type="Pfam" id="PF04353">
    <property type="entry name" value="Rsd_AlgQ"/>
    <property type="match status" value="1"/>
</dbReference>
<dbReference type="PIRSF" id="PIRSF016548">
    <property type="entry name" value="Rsd_AlgQ"/>
    <property type="match status" value="1"/>
</dbReference>
<name>RSD_ECO45</name>